<dbReference type="EMBL" id="CP000414">
    <property type="protein sequence ID" value="ABJ61736.1"/>
    <property type="molecule type" value="Genomic_DNA"/>
</dbReference>
<dbReference type="RefSeq" id="WP_004164419.1">
    <property type="nucleotide sequence ID" value="NC_008531.1"/>
</dbReference>
<dbReference type="SMR" id="Q03YI6"/>
<dbReference type="TCDB" id="2.A.87.2.1">
    <property type="family name" value="the prokaryotic riboflavin transporter (p-rft) family"/>
</dbReference>
<dbReference type="EnsemblBacteria" id="ABJ61736">
    <property type="protein sequence ID" value="ABJ61736"/>
    <property type="gene ID" value="LEUM_0623"/>
</dbReference>
<dbReference type="GeneID" id="29576138"/>
<dbReference type="KEGG" id="lme:LEUM_0623"/>
<dbReference type="eggNOG" id="COG4684">
    <property type="taxonomic scope" value="Bacteria"/>
</dbReference>
<dbReference type="HOGENOM" id="CLU_088550_0_0_9"/>
<dbReference type="Proteomes" id="UP000000362">
    <property type="component" value="Chromosome"/>
</dbReference>
<dbReference type="GO" id="GO:0005886">
    <property type="term" value="C:plasma membrane"/>
    <property type="evidence" value="ECO:0007669"/>
    <property type="project" value="UniProtKB-SubCell"/>
</dbReference>
<dbReference type="GO" id="GO:0022857">
    <property type="term" value="F:transmembrane transporter activity"/>
    <property type="evidence" value="ECO:0007669"/>
    <property type="project" value="InterPro"/>
</dbReference>
<dbReference type="Gene3D" id="1.10.1760.20">
    <property type="match status" value="1"/>
</dbReference>
<dbReference type="InterPro" id="IPR024529">
    <property type="entry name" value="ECF_trnsprt_substrate-spec"/>
</dbReference>
<dbReference type="Pfam" id="PF12822">
    <property type="entry name" value="ECF_trnsprt"/>
    <property type="match status" value="1"/>
</dbReference>
<name>PANT_LEUMM</name>
<protein>
    <recommendedName>
        <fullName>Pantothenate transporter PanT</fullName>
    </recommendedName>
    <alternativeName>
        <fullName>Pantothenic acid ECF transporter S component PanT</fullName>
    </alternativeName>
</protein>
<keyword id="KW-1003">Cell membrane</keyword>
<keyword id="KW-0472">Membrane</keyword>
<keyword id="KW-1185">Reference proteome</keyword>
<keyword id="KW-0812">Transmembrane</keyword>
<keyword id="KW-1133">Transmembrane helix</keyword>
<keyword id="KW-0813">Transport</keyword>
<proteinExistence type="evidence at protein level"/>
<reference key="1">
    <citation type="journal article" date="2006" name="Proc. Natl. Acad. Sci. U.S.A.">
        <title>Comparative genomics of the lactic acid bacteria.</title>
        <authorList>
            <person name="Makarova K.S."/>
            <person name="Slesarev A."/>
            <person name="Wolf Y.I."/>
            <person name="Sorokin A."/>
            <person name="Mirkin B."/>
            <person name="Koonin E.V."/>
            <person name="Pavlov A."/>
            <person name="Pavlova N."/>
            <person name="Karamychev V."/>
            <person name="Polouchine N."/>
            <person name="Shakhova V."/>
            <person name="Grigoriev I."/>
            <person name="Lou Y."/>
            <person name="Rohksar D."/>
            <person name="Lucas S."/>
            <person name="Huang K."/>
            <person name="Goodstein D.M."/>
            <person name="Hawkins T."/>
            <person name="Plengvidhya V."/>
            <person name="Welker D."/>
            <person name="Hughes J."/>
            <person name="Goh Y."/>
            <person name="Benson A."/>
            <person name="Baldwin K."/>
            <person name="Lee J.-H."/>
            <person name="Diaz-Muniz I."/>
            <person name="Dosti B."/>
            <person name="Smeianov V."/>
            <person name="Wechter W."/>
            <person name="Barabote R."/>
            <person name="Lorca G."/>
            <person name="Altermann E."/>
            <person name="Barrangou R."/>
            <person name="Ganesan B."/>
            <person name="Xie Y."/>
            <person name="Rawsthorne H."/>
            <person name="Tamir D."/>
            <person name="Parker C."/>
            <person name="Breidt F."/>
            <person name="Broadbent J.R."/>
            <person name="Hutkins R."/>
            <person name="O'Sullivan D."/>
            <person name="Steele J."/>
            <person name="Unlu G."/>
            <person name="Saier M.H. Jr."/>
            <person name="Klaenhammer T."/>
            <person name="Richardson P."/>
            <person name="Kozyavkin S."/>
            <person name="Weimer B.C."/>
            <person name="Mills D.A."/>
        </authorList>
    </citation>
    <scope>NUCLEOTIDE SEQUENCE [LARGE SCALE GENOMIC DNA]</scope>
    <source>
        <strain>ATCC 8293 / DSM 20343 / BCRC 11652 / CCM 1803 / JCM 6124 / NCDO 523 / NBRC 100496 / NCIMB 8023 / NCTC 12954 / NRRL B-1118 / 37Y</strain>
    </source>
</reference>
<reference key="2">
    <citation type="journal article" date="2009" name="J. Bacteriol.">
        <title>A novel class of modular transporters for vitamins in prokaryotes.</title>
        <authorList>
            <person name="Rodionov D.A."/>
            <person name="Hebbeln P."/>
            <person name="Eudes A."/>
            <person name="ter Beek J."/>
            <person name="Rodionova I.A."/>
            <person name="Erkens G.B."/>
            <person name="Slotboom D.J."/>
            <person name="Gelfand M.S."/>
            <person name="Osterman A.L."/>
            <person name="Hanson A.D."/>
            <person name="Eitinger T."/>
        </authorList>
    </citation>
    <scope>SUBUNIT</scope>
    <scope>SUBCELLULAR LOCATION</scope>
    <scope>EXPRESSION IN E.COLI</scope>
    <source>
        <strain>ATCC 8293 / DSM 20343 / BCRC 11652 / CCM 1803 / JCM 6124 / NCDO 523 / NBRC 100496 / NCIMB 8023 / NCTC 12954 / NRRL B-1118 / 37Y</strain>
    </source>
</reference>
<reference key="3">
    <citation type="journal article" date="2009" name="J. Bacteriol.">
        <title>Two essential arginine residues in the T components of energy-coupling factor transporters.</title>
        <authorList>
            <person name="Neubauer O."/>
            <person name="Alfandega A."/>
            <person name="Schoknecht J."/>
            <person name="Sternberg U."/>
            <person name="Pohlmann A."/>
            <person name="Eitinger T."/>
        </authorList>
    </citation>
    <scope>FUNCTION AS A TRANSPORT COMPONENT</scope>
    <scope>SUBCELLULAR LOCATION</scope>
    <scope>SUBUNIT</scope>
    <scope>EXPRESSION IN E.COLI</scope>
    <source>
        <strain>ATCC 8293 / DSM 20343 / BCRC 11652 / CCM 1803 / JCM 6124 / NCDO 523 / NBRC 100496 / NCIMB 8023 / NCTC 12954 / NRRL B-1118 / 37Y</strain>
    </source>
</reference>
<feature type="chain" id="PRO_0000409013" description="Pantothenate transporter PanT">
    <location>
        <begin position="1"/>
        <end position="204"/>
    </location>
</feature>
<feature type="transmembrane region" description="Helical" evidence="1">
    <location>
        <begin position="18"/>
        <end position="38"/>
    </location>
</feature>
<feature type="transmembrane region" description="Helical" evidence="1">
    <location>
        <begin position="39"/>
        <end position="59"/>
    </location>
</feature>
<feature type="transmembrane region" description="Helical" evidence="1">
    <location>
        <begin position="63"/>
        <end position="83"/>
    </location>
</feature>
<feature type="transmembrane region" description="Helical" evidence="1">
    <location>
        <begin position="86"/>
        <end position="106"/>
    </location>
</feature>
<feature type="transmembrane region" description="Helical" evidence="1">
    <location>
        <begin position="123"/>
        <end position="143"/>
    </location>
</feature>
<feature type="transmembrane region" description="Helical" evidence="1">
    <location>
        <begin position="176"/>
        <end position="196"/>
    </location>
</feature>
<evidence type="ECO:0000255" key="1"/>
<evidence type="ECO:0000269" key="2">
    <source>
    </source>
</evidence>
<evidence type="ECO:0000269" key="3">
    <source>
    </source>
</evidence>
<evidence type="ECO:0000305" key="4">
    <source>
    </source>
</evidence>
<evidence type="ECO:0000305" key="5">
    <source>
    </source>
</evidence>
<gene>
    <name type="primary">panT</name>
    <name type="ordered locus">LEUM_0623</name>
</gene>
<sequence length="204" mass="21943">MSNNKTKYLVITTFFMAIILLQVLIPWLGYIPLGAVIVGAQPTIIQFTVAIAAILLGARRGAFIGGFWGLLTLWQAWSTPGSIGSLMFQNPFTAFIPRILVGLIIGMAFNKWLRNKNFGFRTLGLGFLGGLAALINTVGVVLLTVIGFTVMRTNFTGIPNHNLLGWLIGIVSFNSIFEIITGIILVAAIGNVLVPIAERAGIKG</sequence>
<accession>Q03YI6</accession>
<comment type="function">
    <text evidence="3">Probable pantothenate-binding protein that interacts with the energy-coupling factor (ECF) ABC-transporter complex. Unlike classic ABC transporters this ECF transporter provides the energy necessary to transport a number of different substrates. The substrates themselves are bound by transmembrane, not extracytoplasmic soluble proteins and transport it into cells. Upon coexpression with its energy-coupling factor (ECF) ABC-transporter complex EcfA1A2T in E.coli allows pantothenate uptake; uptake requires both PanT and EcfA1A2T.</text>
</comment>
<comment type="subunit">
    <text evidence="2 3">In E.coli forms a stable energy-coupling factor (ECF) transporter complex probably composed of a membrane-embedded substrate-binding protein (S component), two ATP-binding proteins (A components) and a transmembrane protein (T component).</text>
</comment>
<comment type="subcellular location">
    <subcellularLocation>
        <location evidence="4 5">Cell membrane</location>
        <topology evidence="4 5">Multi-pass membrane protein</topology>
    </subcellularLocation>
</comment>
<organism>
    <name type="scientific">Leuconostoc mesenteroides subsp. mesenteroides (strain ATCC 8293 / DSM 20343 / BCRC 11652 / CCM 1803 / JCM 6124 / NCDO 523 / NBRC 100496 / NCIMB 8023 / NCTC 12954 / NRRL B-1118 / 37Y)</name>
    <dbReference type="NCBI Taxonomy" id="203120"/>
    <lineage>
        <taxon>Bacteria</taxon>
        <taxon>Bacillati</taxon>
        <taxon>Bacillota</taxon>
        <taxon>Bacilli</taxon>
        <taxon>Lactobacillales</taxon>
        <taxon>Lactobacillaceae</taxon>
        <taxon>Leuconostoc</taxon>
    </lineage>
</organism>